<sequence>MSMIVIDGSYGEGGGQILRTSVALSVITGKPVRIYNIRANRPNPGLRPQHMHGILALKELSGAKVKGAQVGSTVLEFYPGRARPRHIRVPIKTAGSVTLVLQALLPAMAFIGGSFEITGGTDVPWSPPVDYLRHVTLFALEKMGLRAEIEIKRRGHYPKGGGLVVGRVEPWEERKPLVALEWRHIELFGGISHATNLPEHVASRQAKAARERLSEFYDVPINIYEEVSRSLGPGSGIVVWAETDVLRLGGDALGKRGKPAEAVGREAADELLEQLTSRAAVDRFLGDQLVPFLAFAGGEIKVAEITNHLVTNVWVVEQFLGKIFEVEGEVGEPGRVRVVG</sequence>
<evidence type="ECO:0000255" key="1">
    <source>
        <dbReference type="HAMAP-Rule" id="MF_00200"/>
    </source>
</evidence>
<comment type="function">
    <text evidence="1">Catalyzes the conversion of 3'-phosphate to a 2',3'-cyclic phosphodiester at the end of RNA. The mechanism of action of the enzyme occurs in 3 steps: (A) adenylation of the enzyme by ATP; (B) transfer of adenylate to an RNA-N3'P to produce RNA-N3'PP5'A; (C) and attack of the adjacent 2'-hydroxyl on the 3'-phosphorus in the diester linkage to produce the cyclic end product. The biological role of this enzyme is unknown but it is likely to function in some aspects of cellular RNA processing.</text>
</comment>
<comment type="catalytic activity">
    <reaction evidence="1">
        <text>a 3'-end 3'-phospho-ribonucleotide-RNA + ATP = a 3'-end 2',3'-cyclophospho-ribonucleotide-RNA + AMP + diphosphate</text>
        <dbReference type="Rhea" id="RHEA:23976"/>
        <dbReference type="Rhea" id="RHEA-COMP:10463"/>
        <dbReference type="Rhea" id="RHEA-COMP:10464"/>
        <dbReference type="ChEBI" id="CHEBI:30616"/>
        <dbReference type="ChEBI" id="CHEBI:33019"/>
        <dbReference type="ChEBI" id="CHEBI:83062"/>
        <dbReference type="ChEBI" id="CHEBI:83064"/>
        <dbReference type="ChEBI" id="CHEBI:456215"/>
        <dbReference type="EC" id="6.5.1.4"/>
    </reaction>
</comment>
<comment type="subcellular location">
    <subcellularLocation>
        <location evidence="1">Cytoplasm</location>
    </subcellularLocation>
</comment>
<comment type="similarity">
    <text evidence="1">Belongs to the RNA 3'-terminal cyclase family. Type 1 subfamily.</text>
</comment>
<accession>B6YSJ5</accession>
<gene>
    <name evidence="1" type="primary">rtcA</name>
    <name type="ordered locus">TON_0048</name>
</gene>
<organism>
    <name type="scientific">Thermococcus onnurineus (strain NA1)</name>
    <dbReference type="NCBI Taxonomy" id="523850"/>
    <lineage>
        <taxon>Archaea</taxon>
        <taxon>Methanobacteriati</taxon>
        <taxon>Methanobacteriota</taxon>
        <taxon>Thermococci</taxon>
        <taxon>Thermococcales</taxon>
        <taxon>Thermococcaceae</taxon>
        <taxon>Thermococcus</taxon>
    </lineage>
</organism>
<name>RTCA_THEON</name>
<dbReference type="EC" id="6.5.1.4" evidence="1"/>
<dbReference type="EMBL" id="CP000855">
    <property type="protein sequence ID" value="ACJ15532.1"/>
    <property type="molecule type" value="Genomic_DNA"/>
</dbReference>
<dbReference type="RefSeq" id="WP_012571005.1">
    <property type="nucleotide sequence ID" value="NC_011529.1"/>
</dbReference>
<dbReference type="SMR" id="B6YSJ5"/>
<dbReference type="STRING" id="523850.TON_0048"/>
<dbReference type="GeneID" id="7017694"/>
<dbReference type="KEGG" id="ton:TON_0048"/>
<dbReference type="PATRIC" id="fig|523850.10.peg.48"/>
<dbReference type="eggNOG" id="arCOG04125">
    <property type="taxonomic scope" value="Archaea"/>
</dbReference>
<dbReference type="HOGENOM" id="CLU_027882_0_0_2"/>
<dbReference type="OrthoDB" id="7994at2157"/>
<dbReference type="Proteomes" id="UP000002727">
    <property type="component" value="Chromosome"/>
</dbReference>
<dbReference type="GO" id="GO:0005737">
    <property type="term" value="C:cytoplasm"/>
    <property type="evidence" value="ECO:0007669"/>
    <property type="project" value="UniProtKB-SubCell"/>
</dbReference>
<dbReference type="GO" id="GO:0005524">
    <property type="term" value="F:ATP binding"/>
    <property type="evidence" value="ECO:0007669"/>
    <property type="project" value="UniProtKB-KW"/>
</dbReference>
<dbReference type="GO" id="GO:0003963">
    <property type="term" value="F:RNA-3'-phosphate cyclase activity"/>
    <property type="evidence" value="ECO:0007669"/>
    <property type="project" value="UniProtKB-UniRule"/>
</dbReference>
<dbReference type="GO" id="GO:0006396">
    <property type="term" value="P:RNA processing"/>
    <property type="evidence" value="ECO:0007669"/>
    <property type="project" value="InterPro"/>
</dbReference>
<dbReference type="CDD" id="cd00874">
    <property type="entry name" value="RNA_Cyclase_Class_II"/>
    <property type="match status" value="1"/>
</dbReference>
<dbReference type="FunFam" id="3.30.360.20:FF:000002">
    <property type="entry name" value="RNA terminal phosphate cyclase-like 1"/>
    <property type="match status" value="1"/>
</dbReference>
<dbReference type="Gene3D" id="3.65.10.20">
    <property type="entry name" value="RNA 3'-terminal phosphate cyclase domain"/>
    <property type="match status" value="1"/>
</dbReference>
<dbReference type="Gene3D" id="3.30.360.20">
    <property type="entry name" value="RNA 3'-terminal phosphate cyclase, insert domain"/>
    <property type="match status" value="1"/>
</dbReference>
<dbReference type="HAMAP" id="MF_00200">
    <property type="entry name" value="RTC"/>
    <property type="match status" value="1"/>
</dbReference>
<dbReference type="InterPro" id="IPR013791">
    <property type="entry name" value="RNA3'-term_phos_cycl_insert"/>
</dbReference>
<dbReference type="InterPro" id="IPR023797">
    <property type="entry name" value="RNA3'_phos_cyclase_dom"/>
</dbReference>
<dbReference type="InterPro" id="IPR037136">
    <property type="entry name" value="RNA3'_phos_cyclase_dom_sf"/>
</dbReference>
<dbReference type="InterPro" id="IPR000228">
    <property type="entry name" value="RNA3'_term_phos_cyc"/>
</dbReference>
<dbReference type="InterPro" id="IPR017770">
    <property type="entry name" value="RNA3'_term_phos_cyc_type_1"/>
</dbReference>
<dbReference type="InterPro" id="IPR020719">
    <property type="entry name" value="RNA3'_term_phos_cycl-like_CS"/>
</dbReference>
<dbReference type="InterPro" id="IPR013792">
    <property type="entry name" value="RNA3'P_cycl/enolpyr_Trfase_a/b"/>
</dbReference>
<dbReference type="InterPro" id="IPR036553">
    <property type="entry name" value="RPTC_insert"/>
</dbReference>
<dbReference type="NCBIfam" id="TIGR03399">
    <property type="entry name" value="RNA_3prim_cycl"/>
    <property type="match status" value="1"/>
</dbReference>
<dbReference type="PANTHER" id="PTHR11096">
    <property type="entry name" value="RNA 3' TERMINAL PHOSPHATE CYCLASE"/>
    <property type="match status" value="1"/>
</dbReference>
<dbReference type="PANTHER" id="PTHR11096:SF0">
    <property type="entry name" value="RNA 3'-TERMINAL PHOSPHATE CYCLASE"/>
    <property type="match status" value="1"/>
</dbReference>
<dbReference type="Pfam" id="PF01137">
    <property type="entry name" value="RTC"/>
    <property type="match status" value="1"/>
</dbReference>
<dbReference type="Pfam" id="PF05189">
    <property type="entry name" value="RTC_insert"/>
    <property type="match status" value="1"/>
</dbReference>
<dbReference type="PIRSF" id="PIRSF005378">
    <property type="entry name" value="RNA3'_term_phos_cycl_euk"/>
    <property type="match status" value="1"/>
</dbReference>
<dbReference type="SUPFAM" id="SSF55205">
    <property type="entry name" value="EPT/RTPC-like"/>
    <property type="match status" value="2"/>
</dbReference>
<dbReference type="SUPFAM" id="SSF52913">
    <property type="entry name" value="RNA 3'-terminal phosphate cyclase, RPTC, insert domain"/>
    <property type="match status" value="1"/>
</dbReference>
<dbReference type="PROSITE" id="PS01287">
    <property type="entry name" value="RTC"/>
    <property type="match status" value="1"/>
</dbReference>
<protein>
    <recommendedName>
        <fullName evidence="1">RNA 3'-terminal phosphate cyclase</fullName>
        <shortName evidence="1">RNA cyclase</shortName>
        <shortName evidence="1">RNA-3'-phosphate cyclase</shortName>
        <ecNumber evidence="1">6.5.1.4</ecNumber>
    </recommendedName>
</protein>
<keyword id="KW-0067">ATP-binding</keyword>
<keyword id="KW-0963">Cytoplasm</keyword>
<keyword id="KW-0436">Ligase</keyword>
<keyword id="KW-0547">Nucleotide-binding</keyword>
<feature type="chain" id="PRO_1000099357" description="RNA 3'-terminal phosphate cyclase">
    <location>
        <begin position="1"/>
        <end position="340"/>
    </location>
</feature>
<feature type="active site" description="Tele-AMP-histidine intermediate" evidence="1">
    <location>
        <position position="308"/>
    </location>
</feature>
<feature type="binding site" evidence="1">
    <location>
        <position position="102"/>
    </location>
    <ligand>
        <name>ATP</name>
        <dbReference type="ChEBI" id="CHEBI:30616"/>
    </ligand>
</feature>
<feature type="binding site" evidence="1">
    <location>
        <begin position="284"/>
        <end position="288"/>
    </location>
    <ligand>
        <name>ATP</name>
        <dbReference type="ChEBI" id="CHEBI:30616"/>
    </ligand>
</feature>
<proteinExistence type="inferred from homology"/>
<reference key="1">
    <citation type="journal article" date="2008" name="J. Bacteriol.">
        <title>The complete genome sequence of Thermococcus onnurineus NA1 reveals a mixed heterotrophic and carboxydotrophic metabolism.</title>
        <authorList>
            <person name="Lee H.S."/>
            <person name="Kang S.G."/>
            <person name="Bae S.S."/>
            <person name="Lim J.K."/>
            <person name="Cho Y."/>
            <person name="Kim Y.J."/>
            <person name="Jeon J.H."/>
            <person name="Cha S.-S."/>
            <person name="Kwon K.K."/>
            <person name="Kim H.-T."/>
            <person name="Park C.-J."/>
            <person name="Lee H.-W."/>
            <person name="Kim S.I."/>
            <person name="Chun J."/>
            <person name="Colwell R.R."/>
            <person name="Kim S.-J."/>
            <person name="Lee J.-H."/>
        </authorList>
    </citation>
    <scope>NUCLEOTIDE SEQUENCE [LARGE SCALE GENOMIC DNA]</scope>
    <source>
        <strain>NA1</strain>
    </source>
</reference>